<accession>P84184</accession>
<accession>O02508</accession>
<accession>Q27250</accession>
<gene>
    <name type="primary">actA3b</name>
</gene>
<feature type="propeptide" id="PRO_0000000674" description="Removed in mature form" evidence="1">
    <location>
        <begin position="1"/>
        <end position="2"/>
    </location>
</feature>
<feature type="chain" id="PRO_0000000675" description="Actin-A3b, cytoplasmic">
    <location>
        <begin position="3"/>
        <end position="376"/>
    </location>
</feature>
<feature type="modified residue" description="N-acetylaspartate" evidence="1">
    <location>
        <position position="3"/>
    </location>
</feature>
<feature type="modified residue" description="Methionine sulfoxide" evidence="1">
    <location>
        <position position="45"/>
    </location>
</feature>
<feature type="modified residue" description="Methionine sulfoxide" evidence="1">
    <location>
        <position position="48"/>
    </location>
</feature>
<sequence>MCDEEVAALVVDNGSGMCKAGFAGDDAPRAVFPSIVGRPRHQGVMVGMGQKDSYVGDEAQSKRGILTLKYPIEHGIVTNWDDMEKIWHHTFYNELRVAPEEHPVLLTEAPLNPKANREKMTQIMFETFNTPAMYVAIQAVLSLYASGRTTGIVLDSGDGVSHTVPIYEGYALPHAILRLDLAGRDLTDYLMKILTERGYSFTTTAEREIVRDIKEKLCYVALDFEQEMATAASSSSLEKSYELPDGQVITIGNERFRCPEALFQPSFLGMEACGIHETTYNSIMKCDVDIRKDLYANTVLSGGTTMYPGIADRMQKEITALAPSTMKIKIIAPPERKYSVWIGGSILASLSTFQQMWISKQEYDESGPSIVHRKCF</sequence>
<reference key="1">
    <citation type="journal article" date="1997" name="J. Mol. Evol.">
        <title>Evidence for gene conversion between tandemly duplicated cytoplasmic actin genes of Helicoverpa armigera (Lepidoptera: Noctuidae).</title>
        <authorList>
            <person name="Rourke I.J."/>
            <person name="East P.D."/>
        </authorList>
    </citation>
    <scope>NUCLEOTIDE SEQUENCE [GENOMIC DNA]</scope>
    <scope>TISSUE SPECIFICITY</scope>
    <scope>DEVELOPMENTAL STAGE</scope>
    <source>
        <strain>AN</strain>
        <tissue>Egg</tissue>
    </source>
</reference>
<dbReference type="EC" id="3.6.4.-" evidence="2"/>
<dbReference type="EMBL" id="X97615">
    <property type="protein sequence ID" value="CAA66219.1"/>
    <property type="molecule type" value="Genomic_DNA"/>
</dbReference>
<dbReference type="SMR" id="P84184"/>
<dbReference type="EnsemblMetazoa" id="XM_021337715.2">
    <property type="protein sequence ID" value="XP_021193390.1"/>
    <property type="gene ID" value="LOC110378449"/>
</dbReference>
<dbReference type="EnsemblMetazoa" id="XM_049843977.1">
    <property type="protein sequence ID" value="XP_049699934.1"/>
    <property type="gene ID" value="LOC110378449"/>
</dbReference>
<dbReference type="EnsemblMetazoa" id="XM_049843978.1">
    <property type="protein sequence ID" value="XP_049699935.1"/>
    <property type="gene ID" value="LOC110378449"/>
</dbReference>
<dbReference type="OMA" id="AGIHETM"/>
<dbReference type="OrthoDB" id="5952856at2759"/>
<dbReference type="GO" id="GO:0005737">
    <property type="term" value="C:cytoplasm"/>
    <property type="evidence" value="ECO:0007669"/>
    <property type="project" value="UniProtKB-KW"/>
</dbReference>
<dbReference type="GO" id="GO:0005856">
    <property type="term" value="C:cytoskeleton"/>
    <property type="evidence" value="ECO:0007669"/>
    <property type="project" value="UniProtKB-SubCell"/>
</dbReference>
<dbReference type="GO" id="GO:0005524">
    <property type="term" value="F:ATP binding"/>
    <property type="evidence" value="ECO:0007669"/>
    <property type="project" value="UniProtKB-KW"/>
</dbReference>
<dbReference type="GO" id="GO:0016787">
    <property type="term" value="F:hydrolase activity"/>
    <property type="evidence" value="ECO:0007669"/>
    <property type="project" value="UniProtKB-KW"/>
</dbReference>
<dbReference type="CDD" id="cd10224">
    <property type="entry name" value="ASKHA_NBD_actin"/>
    <property type="match status" value="1"/>
</dbReference>
<dbReference type="FunFam" id="3.30.420.40:FF:000131">
    <property type="entry name" value="Actin, alpha skeletal muscle"/>
    <property type="match status" value="1"/>
</dbReference>
<dbReference type="FunFam" id="3.30.420.40:FF:000291">
    <property type="entry name" value="Actin, alpha skeletal muscle"/>
    <property type="match status" value="1"/>
</dbReference>
<dbReference type="FunFam" id="3.90.640.10:FF:000047">
    <property type="entry name" value="Actin, alpha skeletal muscle"/>
    <property type="match status" value="1"/>
</dbReference>
<dbReference type="FunFam" id="3.30.420.40:FF:000058">
    <property type="entry name" value="Putative actin-related protein 5"/>
    <property type="match status" value="1"/>
</dbReference>
<dbReference type="Gene3D" id="3.30.420.40">
    <property type="match status" value="2"/>
</dbReference>
<dbReference type="Gene3D" id="3.90.640.10">
    <property type="entry name" value="Actin, Chain A, domain 4"/>
    <property type="match status" value="1"/>
</dbReference>
<dbReference type="InterPro" id="IPR004000">
    <property type="entry name" value="Actin"/>
</dbReference>
<dbReference type="InterPro" id="IPR020902">
    <property type="entry name" value="Actin/actin-like_CS"/>
</dbReference>
<dbReference type="InterPro" id="IPR004001">
    <property type="entry name" value="Actin_CS"/>
</dbReference>
<dbReference type="InterPro" id="IPR043129">
    <property type="entry name" value="ATPase_NBD"/>
</dbReference>
<dbReference type="PANTHER" id="PTHR11937">
    <property type="entry name" value="ACTIN"/>
    <property type="match status" value="1"/>
</dbReference>
<dbReference type="Pfam" id="PF00022">
    <property type="entry name" value="Actin"/>
    <property type="match status" value="1"/>
</dbReference>
<dbReference type="PRINTS" id="PR00190">
    <property type="entry name" value="ACTIN"/>
</dbReference>
<dbReference type="SMART" id="SM00268">
    <property type="entry name" value="ACTIN"/>
    <property type="match status" value="1"/>
</dbReference>
<dbReference type="SUPFAM" id="SSF53067">
    <property type="entry name" value="Actin-like ATPase domain"/>
    <property type="match status" value="2"/>
</dbReference>
<dbReference type="PROSITE" id="PS00406">
    <property type="entry name" value="ACTINS_1"/>
    <property type="match status" value="1"/>
</dbReference>
<dbReference type="PROSITE" id="PS00432">
    <property type="entry name" value="ACTINS_2"/>
    <property type="match status" value="1"/>
</dbReference>
<dbReference type="PROSITE" id="PS01132">
    <property type="entry name" value="ACTINS_ACT_LIKE"/>
    <property type="match status" value="1"/>
</dbReference>
<evidence type="ECO:0000250" key="1"/>
<evidence type="ECO:0000250" key="2">
    <source>
        <dbReference type="UniProtKB" id="P68137"/>
    </source>
</evidence>
<evidence type="ECO:0000269" key="3">
    <source>
    </source>
</evidence>
<evidence type="ECO:0000305" key="4"/>
<organism>
    <name type="scientific">Helicoverpa armigera</name>
    <name type="common">Cotton bollworm</name>
    <name type="synonym">Heliothis armigera</name>
    <dbReference type="NCBI Taxonomy" id="29058"/>
    <lineage>
        <taxon>Eukaryota</taxon>
        <taxon>Metazoa</taxon>
        <taxon>Ecdysozoa</taxon>
        <taxon>Arthropoda</taxon>
        <taxon>Hexapoda</taxon>
        <taxon>Insecta</taxon>
        <taxon>Pterygota</taxon>
        <taxon>Neoptera</taxon>
        <taxon>Endopterygota</taxon>
        <taxon>Lepidoptera</taxon>
        <taxon>Glossata</taxon>
        <taxon>Ditrysia</taxon>
        <taxon>Noctuoidea</taxon>
        <taxon>Noctuidae</taxon>
        <taxon>Heliothinae</taxon>
        <taxon>Helicoverpa</taxon>
    </lineage>
</organism>
<keyword id="KW-0007">Acetylation</keyword>
<keyword id="KW-0067">ATP-binding</keyword>
<keyword id="KW-0963">Cytoplasm</keyword>
<keyword id="KW-0206">Cytoskeleton</keyword>
<keyword id="KW-0378">Hydrolase</keyword>
<keyword id="KW-0547">Nucleotide-binding</keyword>
<keyword id="KW-0558">Oxidation</keyword>
<proteinExistence type="evidence at transcript level"/>
<name>ACT3B_HELAM</name>
<comment type="function">
    <text>Actins are highly conserved proteins that are involved in various types of cell motility and are ubiquitously expressed in all eukaryotic cells. Multiple isoforms are involved in various cellular functions such as cytoskeleton structure, cell mobility, chromosome movement and muscle contraction.</text>
</comment>
<comment type="catalytic activity">
    <reaction evidence="2">
        <text>ATP + H2O = ADP + phosphate + H(+)</text>
        <dbReference type="Rhea" id="RHEA:13065"/>
        <dbReference type="ChEBI" id="CHEBI:15377"/>
        <dbReference type="ChEBI" id="CHEBI:15378"/>
        <dbReference type="ChEBI" id="CHEBI:30616"/>
        <dbReference type="ChEBI" id="CHEBI:43474"/>
        <dbReference type="ChEBI" id="CHEBI:456216"/>
    </reaction>
</comment>
<comment type="subcellular location">
    <subcellularLocation>
        <location>Cytoplasm</location>
        <location>Cytoskeleton</location>
    </subcellularLocation>
</comment>
<comment type="tissue specificity">
    <text evidence="3">Brain of newly enclosed adults.</text>
</comment>
<comment type="developmental stage">
    <text evidence="3">Expressed during pupal development and in adults.</text>
</comment>
<comment type="PTM">
    <text evidence="1">Oxidation of Met-45 to form methionine sulfoxide promotes actin filament depolymerization. Methionine sulfoxide is produced stereospecifically, but it is not known whether the (S)-S-oxide or the (R)-S-oxide is produced (By similarity).</text>
</comment>
<comment type="similarity">
    <text evidence="4">Belongs to the actin family.</text>
</comment>
<protein>
    <recommendedName>
        <fullName>Actin-A3b, cytoplasmic</fullName>
        <ecNumber evidence="2">3.6.4.-</ecNumber>
    </recommendedName>
</protein>